<name>NODI_PARXL</name>
<accession>Q13ZJ1</accession>
<proteinExistence type="inferred from homology"/>
<organism>
    <name type="scientific">Paraburkholderia xenovorans (strain LB400)</name>
    <dbReference type="NCBI Taxonomy" id="266265"/>
    <lineage>
        <taxon>Bacteria</taxon>
        <taxon>Pseudomonadati</taxon>
        <taxon>Pseudomonadota</taxon>
        <taxon>Betaproteobacteria</taxon>
        <taxon>Burkholderiales</taxon>
        <taxon>Burkholderiaceae</taxon>
        <taxon>Paraburkholderia</taxon>
    </lineage>
</organism>
<reference key="1">
    <citation type="journal article" date="2006" name="Proc. Natl. Acad. Sci. U.S.A.">
        <title>Burkholderia xenovorans LB400 harbors a multi-replicon, 9.73-Mbp genome shaped for versatility.</title>
        <authorList>
            <person name="Chain P.S.G."/>
            <person name="Denef V.J."/>
            <person name="Konstantinidis K.T."/>
            <person name="Vergez L.M."/>
            <person name="Agullo L."/>
            <person name="Reyes V.L."/>
            <person name="Hauser L."/>
            <person name="Cordova M."/>
            <person name="Gomez L."/>
            <person name="Gonzalez M."/>
            <person name="Land M."/>
            <person name="Lao V."/>
            <person name="Larimer F."/>
            <person name="LiPuma J.J."/>
            <person name="Mahenthiralingam E."/>
            <person name="Malfatti S.A."/>
            <person name="Marx C.J."/>
            <person name="Parnell J.J."/>
            <person name="Ramette A."/>
            <person name="Richardson P."/>
            <person name="Seeger M."/>
            <person name="Smith D."/>
            <person name="Spilker T."/>
            <person name="Sul W.J."/>
            <person name="Tsoi T.V."/>
            <person name="Ulrich L.E."/>
            <person name="Zhulin I.B."/>
            <person name="Tiedje J.M."/>
        </authorList>
    </citation>
    <scope>NUCLEOTIDE SEQUENCE [LARGE SCALE GENOMIC DNA]</scope>
    <source>
        <strain>LB400</strain>
    </source>
</reference>
<sequence>MPEAAIEFDKVKKSYGEKTVVDGLSFHVAPGECFGLLGPNGAGKTTTLRMLLGIAAPDAGTIRLCGEPIPRRARVARARVGVVPQFDNLDPDFTVRENLLVFGRYFGMSAAQCRAMVPPLLEFARLESKADARVSELSGGMKRRLTLARALVNDPDVLIMDEPTTGLDPQARHLIWERLRSLLARGKTILLTTHFMEEAERLCHRLCVIEEGRKIAEGAPSALIASEIGCDVIEIFGPDPVALRDELAPLVERTEISGETLFCYVIDAQPVHARLKQRADLRYLHRPANLEDVFLRLTGREMQD</sequence>
<keyword id="KW-0067">ATP-binding</keyword>
<keyword id="KW-0997">Cell inner membrane</keyword>
<keyword id="KW-1003">Cell membrane</keyword>
<keyword id="KW-0472">Membrane</keyword>
<keyword id="KW-0536">Nodulation</keyword>
<keyword id="KW-0547">Nucleotide-binding</keyword>
<keyword id="KW-1185">Reference proteome</keyword>
<keyword id="KW-1278">Translocase</keyword>
<keyword id="KW-0813">Transport</keyword>
<dbReference type="EC" id="7.6.2.-" evidence="1"/>
<dbReference type="EMBL" id="CP000270">
    <property type="protein sequence ID" value="ABE30498.1"/>
    <property type="molecule type" value="Genomic_DNA"/>
</dbReference>
<dbReference type="RefSeq" id="WP_011488151.1">
    <property type="nucleotide sequence ID" value="NC_007951.1"/>
</dbReference>
<dbReference type="SMR" id="Q13ZJ1"/>
<dbReference type="STRING" id="266265.Bxe_A2475"/>
<dbReference type="KEGG" id="bxb:DR64_166"/>
<dbReference type="KEGG" id="bxe:Bxe_A2475"/>
<dbReference type="PATRIC" id="fig|266265.5.peg.2056"/>
<dbReference type="eggNOG" id="COG1131">
    <property type="taxonomic scope" value="Bacteria"/>
</dbReference>
<dbReference type="OrthoDB" id="9804819at2"/>
<dbReference type="Proteomes" id="UP000001817">
    <property type="component" value="Chromosome 1"/>
</dbReference>
<dbReference type="GO" id="GO:0005886">
    <property type="term" value="C:plasma membrane"/>
    <property type="evidence" value="ECO:0007669"/>
    <property type="project" value="UniProtKB-SubCell"/>
</dbReference>
<dbReference type="GO" id="GO:0005524">
    <property type="term" value="F:ATP binding"/>
    <property type="evidence" value="ECO:0007669"/>
    <property type="project" value="UniProtKB-KW"/>
</dbReference>
<dbReference type="GO" id="GO:0016887">
    <property type="term" value="F:ATP hydrolysis activity"/>
    <property type="evidence" value="ECO:0007669"/>
    <property type="project" value="InterPro"/>
</dbReference>
<dbReference type="GO" id="GO:0022857">
    <property type="term" value="F:transmembrane transporter activity"/>
    <property type="evidence" value="ECO:0007669"/>
    <property type="project" value="InterPro"/>
</dbReference>
<dbReference type="CDD" id="cd03230">
    <property type="entry name" value="ABC_DR_subfamily_A"/>
    <property type="match status" value="1"/>
</dbReference>
<dbReference type="FunFam" id="3.40.50.300:FF:000589">
    <property type="entry name" value="ABC transporter, ATP-binding subunit"/>
    <property type="match status" value="1"/>
</dbReference>
<dbReference type="Gene3D" id="3.40.50.300">
    <property type="entry name" value="P-loop containing nucleotide triphosphate hydrolases"/>
    <property type="match status" value="1"/>
</dbReference>
<dbReference type="InterPro" id="IPR003593">
    <property type="entry name" value="AAA+_ATPase"/>
</dbReference>
<dbReference type="InterPro" id="IPR003439">
    <property type="entry name" value="ABC_transporter-like_ATP-bd"/>
</dbReference>
<dbReference type="InterPro" id="IPR017871">
    <property type="entry name" value="ABC_transporter-like_CS"/>
</dbReference>
<dbReference type="InterPro" id="IPR050763">
    <property type="entry name" value="ABC_transporter_ATP-binding"/>
</dbReference>
<dbReference type="InterPro" id="IPR005978">
    <property type="entry name" value="ABC_transptNodI"/>
</dbReference>
<dbReference type="InterPro" id="IPR027417">
    <property type="entry name" value="P-loop_NTPase"/>
</dbReference>
<dbReference type="NCBIfam" id="TIGR01288">
    <property type="entry name" value="nodI"/>
    <property type="match status" value="1"/>
</dbReference>
<dbReference type="NCBIfam" id="NF010060">
    <property type="entry name" value="PRK13537.1"/>
    <property type="match status" value="1"/>
</dbReference>
<dbReference type="PANTHER" id="PTHR42711">
    <property type="entry name" value="ABC TRANSPORTER ATP-BINDING PROTEIN"/>
    <property type="match status" value="1"/>
</dbReference>
<dbReference type="PANTHER" id="PTHR42711:SF5">
    <property type="entry name" value="ABC TRANSPORTER ATP-BINDING PROTEIN NATA"/>
    <property type="match status" value="1"/>
</dbReference>
<dbReference type="Pfam" id="PF00005">
    <property type="entry name" value="ABC_tran"/>
    <property type="match status" value="1"/>
</dbReference>
<dbReference type="SMART" id="SM00382">
    <property type="entry name" value="AAA"/>
    <property type="match status" value="1"/>
</dbReference>
<dbReference type="SUPFAM" id="SSF52540">
    <property type="entry name" value="P-loop containing nucleoside triphosphate hydrolases"/>
    <property type="match status" value="1"/>
</dbReference>
<dbReference type="PROSITE" id="PS00211">
    <property type="entry name" value="ABC_TRANSPORTER_1"/>
    <property type="match status" value="1"/>
</dbReference>
<dbReference type="PROSITE" id="PS50893">
    <property type="entry name" value="ABC_TRANSPORTER_2"/>
    <property type="match status" value="1"/>
</dbReference>
<dbReference type="PROSITE" id="PS51240">
    <property type="entry name" value="NODI"/>
    <property type="match status" value="1"/>
</dbReference>
<feature type="chain" id="PRO_0000272601" description="Nod factor export ATP-binding protein I">
    <location>
        <begin position="1"/>
        <end position="304"/>
    </location>
</feature>
<feature type="domain" description="ABC transporter" evidence="1">
    <location>
        <begin position="6"/>
        <end position="236"/>
    </location>
</feature>
<feature type="binding site" evidence="1">
    <location>
        <begin position="38"/>
        <end position="45"/>
    </location>
    <ligand>
        <name>ATP</name>
        <dbReference type="ChEBI" id="CHEBI:30616"/>
    </ligand>
</feature>
<protein>
    <recommendedName>
        <fullName evidence="1">Nod factor export ATP-binding protein I</fullName>
        <ecNumber evidence="1">7.6.2.-</ecNumber>
    </recommendedName>
    <alternativeName>
        <fullName evidence="1">Nodulation ATP-binding protein I</fullName>
    </alternativeName>
</protein>
<evidence type="ECO:0000255" key="1">
    <source>
        <dbReference type="HAMAP-Rule" id="MF_01704"/>
    </source>
</evidence>
<gene>
    <name evidence="1" type="primary">nodI</name>
    <name type="ordered locus">Bxeno_A1960</name>
    <name type="ORF">Bxe_A2475</name>
</gene>
<comment type="function">
    <text evidence="1">Part of the ABC transporter complex NodIJ involved in the export of the nodulation factors (Nod factors), the bacterial signal molecules that induce symbiosis and subsequent nodulation induction. Nod factors are LCO (lipo-chitin oligosaccharide), a modified beta-1,4-linked N-acetylglucosamine oligosaccharide. This subunit is responsible for energy coupling to the transport system.</text>
</comment>
<comment type="subunit">
    <text evidence="1">The complex is composed of two ATP-binding proteins (NodI) and two transmembrane proteins (NodJ).</text>
</comment>
<comment type="subcellular location">
    <subcellularLocation>
        <location evidence="1">Cell inner membrane</location>
        <topology evidence="1">Peripheral membrane protein</topology>
    </subcellularLocation>
</comment>
<comment type="similarity">
    <text evidence="1">Belongs to the ABC transporter superfamily. Lipooligosaccharide exporter (TC 3.A.1.102) family.</text>
</comment>